<name>SURE_PICTO</name>
<proteinExistence type="inferred from homology"/>
<gene>
    <name evidence="1" type="primary">surE</name>
    <name type="ordered locus">PTO1456</name>
</gene>
<accession>Q6KZ11</accession>
<protein>
    <recommendedName>
        <fullName evidence="1">5'-nucleotidase SurE</fullName>
        <ecNumber evidence="1">3.1.3.5</ecNumber>
    </recommendedName>
    <alternativeName>
        <fullName evidence="1">Nucleoside 5'-monophosphate phosphohydrolase</fullName>
    </alternativeName>
</protein>
<keyword id="KW-0963">Cytoplasm</keyword>
<keyword id="KW-0378">Hydrolase</keyword>
<keyword id="KW-0479">Metal-binding</keyword>
<keyword id="KW-0547">Nucleotide-binding</keyword>
<comment type="function">
    <text evidence="1">Nucleotidase that shows phosphatase activity on nucleoside 5'-monophosphates.</text>
</comment>
<comment type="catalytic activity">
    <reaction evidence="1">
        <text>a ribonucleoside 5'-phosphate + H2O = a ribonucleoside + phosphate</text>
        <dbReference type="Rhea" id="RHEA:12484"/>
        <dbReference type="ChEBI" id="CHEBI:15377"/>
        <dbReference type="ChEBI" id="CHEBI:18254"/>
        <dbReference type="ChEBI" id="CHEBI:43474"/>
        <dbReference type="ChEBI" id="CHEBI:58043"/>
        <dbReference type="EC" id="3.1.3.5"/>
    </reaction>
</comment>
<comment type="cofactor">
    <cofactor evidence="1">
        <name>a divalent metal cation</name>
        <dbReference type="ChEBI" id="CHEBI:60240"/>
    </cofactor>
    <text evidence="1">Binds 1 divalent metal cation per subunit.</text>
</comment>
<comment type="subcellular location">
    <subcellularLocation>
        <location evidence="1">Cytoplasm</location>
    </subcellularLocation>
</comment>
<comment type="similarity">
    <text evidence="1">Belongs to the SurE nucleotidase family.</text>
</comment>
<sequence>MILVTNDDGYNSYGIRVLYRAAASIAESYIVAPDHGRSATGMSTTYNVPLRAFKFDYGYAISGFPADSVYMARYALYNDKKIDLIVSGINHGDNISLRSLYSSGTIGATMAGALIGIKGIAFSMSYNGISNEKIDLAEPYIKAIIENAMERFPDDVDILNVNFPGNLNRNTRILPARMSYNIFDDNIIKRLDPNGHEYYWFGNKRHERCPENCDYDVVYRKNSISITPITVKGYLDDLRSTEEFISFINVKELLG</sequence>
<evidence type="ECO:0000255" key="1">
    <source>
        <dbReference type="HAMAP-Rule" id="MF_00060"/>
    </source>
</evidence>
<organism>
    <name type="scientific">Picrophilus torridus (strain ATCC 700027 / DSM 9790 / JCM 10055 / NBRC 100828 / KAW 2/3)</name>
    <dbReference type="NCBI Taxonomy" id="1122961"/>
    <lineage>
        <taxon>Archaea</taxon>
        <taxon>Methanobacteriati</taxon>
        <taxon>Thermoplasmatota</taxon>
        <taxon>Thermoplasmata</taxon>
        <taxon>Thermoplasmatales</taxon>
        <taxon>Picrophilaceae</taxon>
        <taxon>Picrophilus</taxon>
    </lineage>
</organism>
<feature type="chain" id="PRO_0000111868" description="5'-nucleotidase SurE">
    <location>
        <begin position="1"/>
        <end position="255"/>
    </location>
</feature>
<feature type="binding site" evidence="1">
    <location>
        <position position="7"/>
    </location>
    <ligand>
        <name>a divalent metal cation</name>
        <dbReference type="ChEBI" id="CHEBI:60240"/>
    </ligand>
</feature>
<feature type="binding site" evidence="1">
    <location>
        <position position="8"/>
    </location>
    <ligand>
        <name>a divalent metal cation</name>
        <dbReference type="ChEBI" id="CHEBI:60240"/>
    </ligand>
</feature>
<feature type="binding site" evidence="1">
    <location>
        <position position="38"/>
    </location>
    <ligand>
        <name>a divalent metal cation</name>
        <dbReference type="ChEBI" id="CHEBI:60240"/>
    </ligand>
</feature>
<feature type="binding site" evidence="1">
    <location>
        <position position="90"/>
    </location>
    <ligand>
        <name>a divalent metal cation</name>
        <dbReference type="ChEBI" id="CHEBI:60240"/>
    </ligand>
</feature>
<dbReference type="EC" id="3.1.3.5" evidence="1"/>
<dbReference type="EMBL" id="AE017261">
    <property type="protein sequence ID" value="AAT44041.1"/>
    <property type="molecule type" value="Genomic_DNA"/>
</dbReference>
<dbReference type="RefSeq" id="WP_011178257.1">
    <property type="nucleotide sequence ID" value="NC_005877.1"/>
</dbReference>
<dbReference type="SMR" id="Q6KZ11"/>
<dbReference type="STRING" id="263820.PTO1456"/>
<dbReference type="PaxDb" id="263820-PTO1456"/>
<dbReference type="GeneID" id="2845171"/>
<dbReference type="KEGG" id="pto:PTO1456"/>
<dbReference type="PATRIC" id="fig|263820.9.peg.1511"/>
<dbReference type="eggNOG" id="arCOG02303">
    <property type="taxonomic scope" value="Archaea"/>
</dbReference>
<dbReference type="HOGENOM" id="CLU_045192_1_2_2"/>
<dbReference type="InParanoid" id="Q6KZ11"/>
<dbReference type="OrthoDB" id="26873at2157"/>
<dbReference type="Proteomes" id="UP000000438">
    <property type="component" value="Chromosome"/>
</dbReference>
<dbReference type="GO" id="GO:0005737">
    <property type="term" value="C:cytoplasm"/>
    <property type="evidence" value="ECO:0007669"/>
    <property type="project" value="UniProtKB-SubCell"/>
</dbReference>
<dbReference type="GO" id="GO:0008253">
    <property type="term" value="F:5'-nucleotidase activity"/>
    <property type="evidence" value="ECO:0007669"/>
    <property type="project" value="UniProtKB-UniRule"/>
</dbReference>
<dbReference type="GO" id="GO:0046872">
    <property type="term" value="F:metal ion binding"/>
    <property type="evidence" value="ECO:0007669"/>
    <property type="project" value="UniProtKB-UniRule"/>
</dbReference>
<dbReference type="GO" id="GO:0000166">
    <property type="term" value="F:nucleotide binding"/>
    <property type="evidence" value="ECO:0007669"/>
    <property type="project" value="UniProtKB-KW"/>
</dbReference>
<dbReference type="Gene3D" id="3.40.1210.10">
    <property type="entry name" value="Survival protein SurE-like phosphatase/nucleotidase"/>
    <property type="match status" value="1"/>
</dbReference>
<dbReference type="HAMAP" id="MF_00060">
    <property type="entry name" value="SurE"/>
    <property type="match status" value="1"/>
</dbReference>
<dbReference type="InterPro" id="IPR030048">
    <property type="entry name" value="SurE"/>
</dbReference>
<dbReference type="InterPro" id="IPR002828">
    <property type="entry name" value="SurE-like_Pase/nucleotidase"/>
</dbReference>
<dbReference type="InterPro" id="IPR036523">
    <property type="entry name" value="SurE-like_sf"/>
</dbReference>
<dbReference type="NCBIfam" id="TIGR00087">
    <property type="entry name" value="surE"/>
    <property type="match status" value="1"/>
</dbReference>
<dbReference type="PANTHER" id="PTHR30457">
    <property type="entry name" value="5'-NUCLEOTIDASE SURE"/>
    <property type="match status" value="1"/>
</dbReference>
<dbReference type="PANTHER" id="PTHR30457:SF0">
    <property type="entry name" value="PHOSPHATASE, PUTATIVE (AFU_ORTHOLOGUE AFUA_4G01070)-RELATED"/>
    <property type="match status" value="1"/>
</dbReference>
<dbReference type="Pfam" id="PF01975">
    <property type="entry name" value="SurE"/>
    <property type="match status" value="1"/>
</dbReference>
<dbReference type="SUPFAM" id="SSF64167">
    <property type="entry name" value="SurE-like"/>
    <property type="match status" value="1"/>
</dbReference>
<reference key="1">
    <citation type="journal article" date="2004" name="Proc. Natl. Acad. Sci. U.S.A.">
        <title>Genome sequence of Picrophilus torridus and its implications for life around pH 0.</title>
        <authorList>
            <person name="Fuetterer O."/>
            <person name="Angelov A."/>
            <person name="Liesegang H."/>
            <person name="Gottschalk G."/>
            <person name="Schleper C."/>
            <person name="Schepers B."/>
            <person name="Dock C."/>
            <person name="Antranikian G."/>
            <person name="Liebl W."/>
        </authorList>
    </citation>
    <scope>NUCLEOTIDE SEQUENCE [LARGE SCALE GENOMIC DNA]</scope>
    <source>
        <strain>ATCC 700027 / DSM 9790 / JCM 10055 / NBRC 100828 / KAW 2/3</strain>
    </source>
</reference>